<keyword id="KW-0028">Amino-acid biosynthesis</keyword>
<keyword id="KW-0057">Aromatic amino acid biosynthesis</keyword>
<keyword id="KW-0521">NADP</keyword>
<keyword id="KW-0560">Oxidoreductase</keyword>
<evidence type="ECO:0000255" key="1">
    <source>
        <dbReference type="HAMAP-Rule" id="MF_00222"/>
    </source>
</evidence>
<dbReference type="EC" id="1.1.1.25" evidence="1"/>
<dbReference type="EMBL" id="CP000503">
    <property type="protein sequence ID" value="ABM22885.1"/>
    <property type="molecule type" value="Genomic_DNA"/>
</dbReference>
<dbReference type="RefSeq" id="WP_011787453.1">
    <property type="nucleotide sequence ID" value="NC_008750.1"/>
</dbReference>
<dbReference type="SMR" id="A1RDZ0"/>
<dbReference type="GeneID" id="67441624"/>
<dbReference type="KEGG" id="shw:Sputw3181_0032"/>
<dbReference type="HOGENOM" id="CLU_044063_2_1_6"/>
<dbReference type="UniPathway" id="UPA00053">
    <property type="reaction ID" value="UER00087"/>
</dbReference>
<dbReference type="Proteomes" id="UP000002597">
    <property type="component" value="Chromosome"/>
</dbReference>
<dbReference type="GO" id="GO:0005829">
    <property type="term" value="C:cytosol"/>
    <property type="evidence" value="ECO:0007669"/>
    <property type="project" value="TreeGrafter"/>
</dbReference>
<dbReference type="GO" id="GO:0050661">
    <property type="term" value="F:NADP binding"/>
    <property type="evidence" value="ECO:0007669"/>
    <property type="project" value="InterPro"/>
</dbReference>
<dbReference type="GO" id="GO:0004764">
    <property type="term" value="F:shikimate 3-dehydrogenase (NADP+) activity"/>
    <property type="evidence" value="ECO:0007669"/>
    <property type="project" value="UniProtKB-UniRule"/>
</dbReference>
<dbReference type="GO" id="GO:0008652">
    <property type="term" value="P:amino acid biosynthetic process"/>
    <property type="evidence" value="ECO:0007669"/>
    <property type="project" value="UniProtKB-KW"/>
</dbReference>
<dbReference type="GO" id="GO:0009073">
    <property type="term" value="P:aromatic amino acid family biosynthetic process"/>
    <property type="evidence" value="ECO:0007669"/>
    <property type="project" value="UniProtKB-KW"/>
</dbReference>
<dbReference type="GO" id="GO:0009423">
    <property type="term" value="P:chorismate biosynthetic process"/>
    <property type="evidence" value="ECO:0007669"/>
    <property type="project" value="UniProtKB-UniRule"/>
</dbReference>
<dbReference type="GO" id="GO:0019632">
    <property type="term" value="P:shikimate metabolic process"/>
    <property type="evidence" value="ECO:0007669"/>
    <property type="project" value="InterPro"/>
</dbReference>
<dbReference type="CDD" id="cd01065">
    <property type="entry name" value="NAD_bind_Shikimate_DH"/>
    <property type="match status" value="1"/>
</dbReference>
<dbReference type="FunFam" id="3.40.50.10860:FF:000006">
    <property type="entry name" value="Shikimate dehydrogenase (NADP(+))"/>
    <property type="match status" value="1"/>
</dbReference>
<dbReference type="FunFam" id="3.40.50.720:FF:000104">
    <property type="entry name" value="Shikimate dehydrogenase (NADP(+))"/>
    <property type="match status" value="1"/>
</dbReference>
<dbReference type="Gene3D" id="3.40.50.10860">
    <property type="entry name" value="Leucine Dehydrogenase, chain A, domain 1"/>
    <property type="match status" value="1"/>
</dbReference>
<dbReference type="Gene3D" id="3.40.50.720">
    <property type="entry name" value="NAD(P)-binding Rossmann-like Domain"/>
    <property type="match status" value="1"/>
</dbReference>
<dbReference type="HAMAP" id="MF_00222">
    <property type="entry name" value="Shikimate_DH_AroE"/>
    <property type="match status" value="1"/>
</dbReference>
<dbReference type="InterPro" id="IPR046346">
    <property type="entry name" value="Aminoacid_DH-like_N_sf"/>
</dbReference>
<dbReference type="InterPro" id="IPR036291">
    <property type="entry name" value="NAD(P)-bd_dom_sf"/>
</dbReference>
<dbReference type="InterPro" id="IPR041121">
    <property type="entry name" value="SDH_C"/>
</dbReference>
<dbReference type="InterPro" id="IPR011342">
    <property type="entry name" value="Shikimate_DH"/>
</dbReference>
<dbReference type="InterPro" id="IPR013708">
    <property type="entry name" value="Shikimate_DH-bd_N"/>
</dbReference>
<dbReference type="InterPro" id="IPR022893">
    <property type="entry name" value="Shikimate_DH_fam"/>
</dbReference>
<dbReference type="InterPro" id="IPR006151">
    <property type="entry name" value="Shikm_DH/Glu-tRNA_Rdtase"/>
</dbReference>
<dbReference type="NCBIfam" id="TIGR00507">
    <property type="entry name" value="aroE"/>
    <property type="match status" value="1"/>
</dbReference>
<dbReference type="NCBIfam" id="NF001310">
    <property type="entry name" value="PRK00258.1-2"/>
    <property type="match status" value="1"/>
</dbReference>
<dbReference type="PANTHER" id="PTHR21089:SF1">
    <property type="entry name" value="BIFUNCTIONAL 3-DEHYDROQUINATE DEHYDRATASE_SHIKIMATE DEHYDROGENASE, CHLOROPLASTIC"/>
    <property type="match status" value="1"/>
</dbReference>
<dbReference type="PANTHER" id="PTHR21089">
    <property type="entry name" value="SHIKIMATE DEHYDROGENASE"/>
    <property type="match status" value="1"/>
</dbReference>
<dbReference type="Pfam" id="PF18317">
    <property type="entry name" value="SDH_C"/>
    <property type="match status" value="1"/>
</dbReference>
<dbReference type="Pfam" id="PF01488">
    <property type="entry name" value="Shikimate_DH"/>
    <property type="match status" value="1"/>
</dbReference>
<dbReference type="Pfam" id="PF08501">
    <property type="entry name" value="Shikimate_dh_N"/>
    <property type="match status" value="1"/>
</dbReference>
<dbReference type="SUPFAM" id="SSF53223">
    <property type="entry name" value="Aminoacid dehydrogenase-like, N-terminal domain"/>
    <property type="match status" value="1"/>
</dbReference>
<dbReference type="SUPFAM" id="SSF51735">
    <property type="entry name" value="NAD(P)-binding Rossmann-fold domains"/>
    <property type="match status" value="1"/>
</dbReference>
<protein>
    <recommendedName>
        <fullName evidence="1">Shikimate dehydrogenase (NADP(+))</fullName>
        <shortName evidence="1">SDH</shortName>
        <ecNumber evidence="1">1.1.1.25</ecNumber>
    </recommendedName>
</protein>
<gene>
    <name evidence="1" type="primary">aroE</name>
    <name type="ordered locus">Sputw3181_0032</name>
</gene>
<sequence length="282" mass="29515">MTDKYAVFGNPISHSKSPFIHGQFAAPTQELLTYEAILAPVDGFEASLTAFFNAGGKGANVTVPFKEQAFALCDSLSPEAKLAGAVNTLSLLADGTIRGDNTDGLGLVADLIANLGSLQGKRVLLIGAGGAARGCILPLLNAGIAQLTISNRTHTKAQLLVDIFTSVDNGAFANRVTAVEMNELVGEFDIIINSTSASLAGELPPVPAHIITPQTVCYDMMYGASVTAFNQWALSQGAAKVIDGLGMLVGQAAKSFTLWRGVEPDTQVVLTLLRDKLKAEPK</sequence>
<feature type="chain" id="PRO_0000325171" description="Shikimate dehydrogenase (NADP(+))">
    <location>
        <begin position="1"/>
        <end position="282"/>
    </location>
</feature>
<feature type="active site" description="Proton acceptor" evidence="1">
    <location>
        <position position="66"/>
    </location>
</feature>
<feature type="binding site" evidence="1">
    <location>
        <begin position="15"/>
        <end position="17"/>
    </location>
    <ligand>
        <name>shikimate</name>
        <dbReference type="ChEBI" id="CHEBI:36208"/>
    </ligand>
</feature>
<feature type="binding site" evidence="1">
    <location>
        <position position="62"/>
    </location>
    <ligand>
        <name>shikimate</name>
        <dbReference type="ChEBI" id="CHEBI:36208"/>
    </ligand>
</feature>
<feature type="binding site" evidence="1">
    <location>
        <position position="87"/>
    </location>
    <ligand>
        <name>shikimate</name>
        <dbReference type="ChEBI" id="CHEBI:36208"/>
    </ligand>
</feature>
<feature type="binding site" evidence="1">
    <location>
        <position position="103"/>
    </location>
    <ligand>
        <name>shikimate</name>
        <dbReference type="ChEBI" id="CHEBI:36208"/>
    </ligand>
</feature>
<feature type="binding site" evidence="1">
    <location>
        <begin position="127"/>
        <end position="131"/>
    </location>
    <ligand>
        <name>NADP(+)</name>
        <dbReference type="ChEBI" id="CHEBI:58349"/>
    </ligand>
</feature>
<feature type="binding site" evidence="1">
    <location>
        <begin position="151"/>
        <end position="156"/>
    </location>
    <ligand>
        <name>NADP(+)</name>
        <dbReference type="ChEBI" id="CHEBI:58349"/>
    </ligand>
</feature>
<feature type="binding site" evidence="1">
    <location>
        <position position="220"/>
    </location>
    <ligand>
        <name>NADP(+)</name>
        <dbReference type="ChEBI" id="CHEBI:58349"/>
    </ligand>
</feature>
<feature type="binding site" evidence="1">
    <location>
        <position position="222"/>
    </location>
    <ligand>
        <name>shikimate</name>
        <dbReference type="ChEBI" id="CHEBI:36208"/>
    </ligand>
</feature>
<feature type="binding site" evidence="1">
    <location>
        <position position="244"/>
    </location>
    <ligand>
        <name>NADP(+)</name>
        <dbReference type="ChEBI" id="CHEBI:58349"/>
    </ligand>
</feature>
<reference key="1">
    <citation type="submission" date="2006-12" db="EMBL/GenBank/DDBJ databases">
        <title>Complete sequence of Shewanella sp. W3-18-1.</title>
        <authorList>
            <consortium name="US DOE Joint Genome Institute"/>
            <person name="Copeland A."/>
            <person name="Lucas S."/>
            <person name="Lapidus A."/>
            <person name="Barry K."/>
            <person name="Detter J.C."/>
            <person name="Glavina del Rio T."/>
            <person name="Hammon N."/>
            <person name="Israni S."/>
            <person name="Dalin E."/>
            <person name="Tice H."/>
            <person name="Pitluck S."/>
            <person name="Chain P."/>
            <person name="Malfatti S."/>
            <person name="Shin M."/>
            <person name="Vergez L."/>
            <person name="Schmutz J."/>
            <person name="Larimer F."/>
            <person name="Land M."/>
            <person name="Hauser L."/>
            <person name="Kyrpides N."/>
            <person name="Lykidis A."/>
            <person name="Tiedje J."/>
            <person name="Richardson P."/>
        </authorList>
    </citation>
    <scope>NUCLEOTIDE SEQUENCE [LARGE SCALE GENOMIC DNA]</scope>
    <source>
        <strain>W3-18-1</strain>
    </source>
</reference>
<name>AROE_SHESW</name>
<accession>A1RDZ0</accession>
<proteinExistence type="inferred from homology"/>
<organism>
    <name type="scientific">Shewanella sp. (strain W3-18-1)</name>
    <dbReference type="NCBI Taxonomy" id="351745"/>
    <lineage>
        <taxon>Bacteria</taxon>
        <taxon>Pseudomonadati</taxon>
        <taxon>Pseudomonadota</taxon>
        <taxon>Gammaproteobacteria</taxon>
        <taxon>Alteromonadales</taxon>
        <taxon>Shewanellaceae</taxon>
        <taxon>Shewanella</taxon>
    </lineage>
</organism>
<comment type="function">
    <text evidence="1">Involved in the biosynthesis of the chorismate, which leads to the biosynthesis of aromatic amino acids. Catalyzes the reversible NADPH linked reduction of 3-dehydroshikimate (DHSA) to yield shikimate (SA).</text>
</comment>
<comment type="catalytic activity">
    <reaction evidence="1">
        <text>shikimate + NADP(+) = 3-dehydroshikimate + NADPH + H(+)</text>
        <dbReference type="Rhea" id="RHEA:17737"/>
        <dbReference type="ChEBI" id="CHEBI:15378"/>
        <dbReference type="ChEBI" id="CHEBI:16630"/>
        <dbReference type="ChEBI" id="CHEBI:36208"/>
        <dbReference type="ChEBI" id="CHEBI:57783"/>
        <dbReference type="ChEBI" id="CHEBI:58349"/>
        <dbReference type="EC" id="1.1.1.25"/>
    </reaction>
</comment>
<comment type="pathway">
    <text evidence="1">Metabolic intermediate biosynthesis; chorismate biosynthesis; chorismate from D-erythrose 4-phosphate and phosphoenolpyruvate: step 4/7.</text>
</comment>
<comment type="subunit">
    <text evidence="1">Homodimer.</text>
</comment>
<comment type="similarity">
    <text evidence="1">Belongs to the shikimate dehydrogenase family.</text>
</comment>